<keyword id="KW-0963">Cytoplasm</keyword>
<keyword id="KW-0501">Molybdenum cofactor biosynthesis</keyword>
<name>FDHD_ECO81</name>
<organism>
    <name type="scientific">Escherichia coli O81 (strain ED1a)</name>
    <dbReference type="NCBI Taxonomy" id="585397"/>
    <lineage>
        <taxon>Bacteria</taxon>
        <taxon>Pseudomonadati</taxon>
        <taxon>Pseudomonadota</taxon>
        <taxon>Gammaproteobacteria</taxon>
        <taxon>Enterobacterales</taxon>
        <taxon>Enterobacteriaceae</taxon>
        <taxon>Escherichia</taxon>
    </lineage>
</organism>
<sequence>MKKTQQKEIENVTNITGVRQIELWRRDDLQHPRLDEVAEEVPVALVYNGISHVVMMASPKDLEYFALGFSLSEGIIESPRDIFGMDVVPSCNGLEVQIELSSRRFMGLKERRRALAGRTGCGVCGVEQLNDIGKPVQPLPFTQTFDLNKLDDALRHLNDFQPVGQLTGCTHAAAWMLPSGELVGGHEDVGRHVALDKLLGRRSQEGESWQQGAVLVSSRASYEMVQKSAMCGVEILFAVSAATTLAVEVAERCNLTLVGFCKPGRATVYTHPQRLSN</sequence>
<protein>
    <recommendedName>
        <fullName evidence="1">Sulfur carrier protein FdhD</fullName>
    </recommendedName>
</protein>
<proteinExistence type="inferred from homology"/>
<dbReference type="EMBL" id="CU928162">
    <property type="protein sequence ID" value="CAR10571.1"/>
    <property type="molecule type" value="Genomic_DNA"/>
</dbReference>
<dbReference type="RefSeq" id="WP_000753589.1">
    <property type="nucleotide sequence ID" value="NC_011745.1"/>
</dbReference>
<dbReference type="SMR" id="B7MQY8"/>
<dbReference type="GeneID" id="75174135"/>
<dbReference type="KEGG" id="ecq:ECED1_4599"/>
<dbReference type="HOGENOM" id="CLU_056887_2_0_6"/>
<dbReference type="Proteomes" id="UP000000748">
    <property type="component" value="Chromosome"/>
</dbReference>
<dbReference type="GO" id="GO:0005737">
    <property type="term" value="C:cytoplasm"/>
    <property type="evidence" value="ECO:0007669"/>
    <property type="project" value="UniProtKB-SubCell"/>
</dbReference>
<dbReference type="GO" id="GO:0097163">
    <property type="term" value="F:sulfur carrier activity"/>
    <property type="evidence" value="ECO:0007669"/>
    <property type="project" value="UniProtKB-UniRule"/>
</dbReference>
<dbReference type="GO" id="GO:0016783">
    <property type="term" value="F:sulfurtransferase activity"/>
    <property type="evidence" value="ECO:0007669"/>
    <property type="project" value="InterPro"/>
</dbReference>
<dbReference type="GO" id="GO:0006777">
    <property type="term" value="P:Mo-molybdopterin cofactor biosynthetic process"/>
    <property type="evidence" value="ECO:0007669"/>
    <property type="project" value="UniProtKB-UniRule"/>
</dbReference>
<dbReference type="FunFam" id="3.10.20.10:FF:000003">
    <property type="entry name" value="Sulfur carrier protein FdhD"/>
    <property type="match status" value="1"/>
</dbReference>
<dbReference type="FunFam" id="3.40.140.10:FF:000027">
    <property type="entry name" value="Sulfur carrier protein FdhD"/>
    <property type="match status" value="1"/>
</dbReference>
<dbReference type="Gene3D" id="3.10.20.10">
    <property type="match status" value="1"/>
</dbReference>
<dbReference type="Gene3D" id="3.40.140.10">
    <property type="entry name" value="Cytidine Deaminase, domain 2"/>
    <property type="match status" value="1"/>
</dbReference>
<dbReference type="HAMAP" id="MF_00187">
    <property type="entry name" value="FdhD"/>
    <property type="match status" value="1"/>
</dbReference>
<dbReference type="InterPro" id="IPR016193">
    <property type="entry name" value="Cytidine_deaminase-like"/>
</dbReference>
<dbReference type="InterPro" id="IPR003786">
    <property type="entry name" value="FdhD"/>
</dbReference>
<dbReference type="NCBIfam" id="TIGR00129">
    <property type="entry name" value="fdhD_narQ"/>
    <property type="match status" value="1"/>
</dbReference>
<dbReference type="PANTHER" id="PTHR30592">
    <property type="entry name" value="FORMATE DEHYDROGENASE"/>
    <property type="match status" value="1"/>
</dbReference>
<dbReference type="PANTHER" id="PTHR30592:SF1">
    <property type="entry name" value="SULFUR CARRIER PROTEIN FDHD"/>
    <property type="match status" value="1"/>
</dbReference>
<dbReference type="Pfam" id="PF02634">
    <property type="entry name" value="FdhD-NarQ"/>
    <property type="match status" value="1"/>
</dbReference>
<dbReference type="PIRSF" id="PIRSF015626">
    <property type="entry name" value="FdhD"/>
    <property type="match status" value="1"/>
</dbReference>
<dbReference type="SUPFAM" id="SSF53927">
    <property type="entry name" value="Cytidine deaminase-like"/>
    <property type="match status" value="1"/>
</dbReference>
<accession>B7MQY8</accession>
<gene>
    <name evidence="1" type="primary">fdhD</name>
    <name type="ordered locus">ECED1_4599</name>
</gene>
<reference key="1">
    <citation type="journal article" date="2009" name="PLoS Genet.">
        <title>Organised genome dynamics in the Escherichia coli species results in highly diverse adaptive paths.</title>
        <authorList>
            <person name="Touchon M."/>
            <person name="Hoede C."/>
            <person name="Tenaillon O."/>
            <person name="Barbe V."/>
            <person name="Baeriswyl S."/>
            <person name="Bidet P."/>
            <person name="Bingen E."/>
            <person name="Bonacorsi S."/>
            <person name="Bouchier C."/>
            <person name="Bouvet O."/>
            <person name="Calteau A."/>
            <person name="Chiapello H."/>
            <person name="Clermont O."/>
            <person name="Cruveiller S."/>
            <person name="Danchin A."/>
            <person name="Diard M."/>
            <person name="Dossat C."/>
            <person name="Karoui M.E."/>
            <person name="Frapy E."/>
            <person name="Garry L."/>
            <person name="Ghigo J.M."/>
            <person name="Gilles A.M."/>
            <person name="Johnson J."/>
            <person name="Le Bouguenec C."/>
            <person name="Lescat M."/>
            <person name="Mangenot S."/>
            <person name="Martinez-Jehanne V."/>
            <person name="Matic I."/>
            <person name="Nassif X."/>
            <person name="Oztas S."/>
            <person name="Petit M.A."/>
            <person name="Pichon C."/>
            <person name="Rouy Z."/>
            <person name="Ruf C.S."/>
            <person name="Schneider D."/>
            <person name="Tourret J."/>
            <person name="Vacherie B."/>
            <person name="Vallenet D."/>
            <person name="Medigue C."/>
            <person name="Rocha E.P.C."/>
            <person name="Denamur E."/>
        </authorList>
    </citation>
    <scope>NUCLEOTIDE SEQUENCE [LARGE SCALE GENOMIC DNA]</scope>
    <source>
        <strain>ED1a</strain>
    </source>
</reference>
<feature type="chain" id="PRO_1000124216" description="Sulfur carrier protein FdhD">
    <location>
        <begin position="1"/>
        <end position="277"/>
    </location>
</feature>
<feature type="active site" description="Cysteine persulfide intermediate" evidence="1">
    <location>
        <position position="121"/>
    </location>
</feature>
<feature type="binding site" evidence="1">
    <location>
        <begin position="260"/>
        <end position="265"/>
    </location>
    <ligand>
        <name>Mo-bis(molybdopterin guanine dinucleotide)</name>
        <dbReference type="ChEBI" id="CHEBI:60539"/>
    </ligand>
</feature>
<comment type="function">
    <text evidence="1">Required for formate dehydrogenase (FDH) activity. Acts as a sulfur carrier protein that transfers sulfur from IscS to the molybdenum cofactor prior to its insertion into FDH.</text>
</comment>
<comment type="subcellular location">
    <subcellularLocation>
        <location evidence="1">Cytoplasm</location>
    </subcellularLocation>
</comment>
<comment type="similarity">
    <text evidence="1">Belongs to the FdhD family.</text>
</comment>
<evidence type="ECO:0000255" key="1">
    <source>
        <dbReference type="HAMAP-Rule" id="MF_00187"/>
    </source>
</evidence>